<proteinExistence type="evidence at protein level"/>
<accession>Q9UYT0</accession>
<accession>G8ZHN5</accession>
<keyword id="KW-0067">ATP-binding</keyword>
<keyword id="KW-0173">Coenzyme A biosynthesis</keyword>
<keyword id="KW-0963">Cytoplasm</keyword>
<keyword id="KW-0547">Nucleotide-binding</keyword>
<keyword id="KW-0548">Nucleotidyltransferase</keyword>
<keyword id="KW-0808">Transferase</keyword>
<evidence type="ECO:0000255" key="1">
    <source>
        <dbReference type="HAMAP-Rule" id="MF_00647"/>
    </source>
</evidence>
<evidence type="ECO:0000305" key="2"/>
<reference key="1">
    <citation type="journal article" date="2003" name="Mol. Microbiol.">
        <title>An integrated analysis of the genome of the hyperthermophilic archaeon Pyrococcus abyssi.</title>
        <authorList>
            <person name="Cohen G.N."/>
            <person name="Barbe V."/>
            <person name="Flament D."/>
            <person name="Galperin M."/>
            <person name="Heilig R."/>
            <person name="Lecompte O."/>
            <person name="Poch O."/>
            <person name="Prieur D."/>
            <person name="Querellou J."/>
            <person name="Ripp R."/>
            <person name="Thierry J.-C."/>
            <person name="Van der Oost J."/>
            <person name="Weissenbach J."/>
            <person name="Zivanovic Y."/>
            <person name="Forterre P."/>
        </authorList>
    </citation>
    <scope>NUCLEOTIDE SEQUENCE [LARGE SCALE GENOMIC DNA]</scope>
    <source>
        <strain>GE5 / Orsay</strain>
    </source>
</reference>
<reference key="2">
    <citation type="journal article" date="2012" name="Curr. Microbiol.">
        <title>Re-annotation of two hyperthermophilic archaea Pyrococcus abyssi GE5 and Pyrococcus furiosus DSM 3638.</title>
        <authorList>
            <person name="Gao J."/>
            <person name="Wang J."/>
        </authorList>
    </citation>
    <scope>GENOME REANNOTATION</scope>
    <source>
        <strain>GE5 / Orsay</strain>
    </source>
</reference>
<reference key="3">
    <citation type="journal article" date="2003" name="J. Biol. Chem.">
        <title>Identification, purification, and characterization of an eukaryotic-like phosphopantetheine adenylyltransferase (coenzyme A biosynthetic pathway) in the hyperthermophilic archaeon Pyrococcus abyssi.</title>
        <authorList>
            <person name="Armengaud J."/>
            <person name="Fernandez B."/>
            <person name="Chaumont V."/>
            <person name="Rollin-Genetet F."/>
            <person name="Finet S."/>
            <person name="Marchetti C."/>
            <person name="Myllykallio H."/>
            <person name="Vidaud C."/>
            <person name="Pellequer J.-L."/>
            <person name="Gribaldo S."/>
            <person name="Forterre P."/>
            <person name="Gans P."/>
        </authorList>
    </citation>
    <scope>CHARACTERIZATION</scope>
</reference>
<sequence length="157" mass="17965">MMKFKKVVVGGTFDRLHLGHKALLRKAFEVGKIVYIGLTSDDMVKNKPYAEKILPYERRLKDLIEFLEVNNFRRYRIIKINNAIGFTTRIRSLEAIVVSEETYKGALLVNRAREEVGLRPLEIIVIPIIKSKLGDKISSSLIRAGLIDPFGNPIKRE</sequence>
<name>COAD_PYRAB</name>
<gene>
    <name evidence="1" type="primary">coaD</name>
    <name type="ordered locus">PYRAB14270</name>
    <name type="ORF">PAB0944</name>
</gene>
<organism>
    <name type="scientific">Pyrococcus abyssi (strain GE5 / Orsay)</name>
    <dbReference type="NCBI Taxonomy" id="272844"/>
    <lineage>
        <taxon>Archaea</taxon>
        <taxon>Methanobacteriati</taxon>
        <taxon>Methanobacteriota</taxon>
        <taxon>Thermococci</taxon>
        <taxon>Thermococcales</taxon>
        <taxon>Thermococcaceae</taxon>
        <taxon>Pyrococcus</taxon>
    </lineage>
</organism>
<dbReference type="EC" id="2.7.7.3" evidence="1"/>
<dbReference type="EMBL" id="AJ248287">
    <property type="protein sequence ID" value="CAB50332.1"/>
    <property type="molecule type" value="Genomic_DNA"/>
</dbReference>
<dbReference type="EMBL" id="HE613800">
    <property type="protein sequence ID" value="CCE70872.1"/>
    <property type="molecule type" value="Genomic_DNA"/>
</dbReference>
<dbReference type="PIR" id="G75054">
    <property type="entry name" value="G75054"/>
</dbReference>
<dbReference type="SMR" id="Q9UYT0"/>
<dbReference type="STRING" id="272844.PAB0944"/>
<dbReference type="KEGG" id="pab:PAB0944"/>
<dbReference type="PATRIC" id="fig|272844.11.peg.1517"/>
<dbReference type="eggNOG" id="arCOG01223">
    <property type="taxonomic scope" value="Archaea"/>
</dbReference>
<dbReference type="HOGENOM" id="CLU_035272_5_0_2"/>
<dbReference type="BioCyc" id="MetaCyc:MONOMER-21897"/>
<dbReference type="BRENDA" id="2.7.7.3">
    <property type="organism ID" value="5242"/>
</dbReference>
<dbReference type="UniPathway" id="UPA00241"/>
<dbReference type="Proteomes" id="UP000000810">
    <property type="component" value="Chromosome"/>
</dbReference>
<dbReference type="Proteomes" id="UP000009139">
    <property type="component" value="Chromosome"/>
</dbReference>
<dbReference type="GO" id="GO:0005737">
    <property type="term" value="C:cytoplasm"/>
    <property type="evidence" value="ECO:0007669"/>
    <property type="project" value="UniProtKB-SubCell"/>
</dbReference>
<dbReference type="GO" id="GO:0005524">
    <property type="term" value="F:ATP binding"/>
    <property type="evidence" value="ECO:0007669"/>
    <property type="project" value="UniProtKB-KW"/>
</dbReference>
<dbReference type="GO" id="GO:0004140">
    <property type="term" value="F:dephospho-CoA kinase activity"/>
    <property type="evidence" value="ECO:0007669"/>
    <property type="project" value="TreeGrafter"/>
</dbReference>
<dbReference type="GO" id="GO:0004595">
    <property type="term" value="F:pantetheine-phosphate adenylyltransferase activity"/>
    <property type="evidence" value="ECO:0007669"/>
    <property type="project" value="UniProtKB-UniRule"/>
</dbReference>
<dbReference type="GO" id="GO:0015937">
    <property type="term" value="P:coenzyme A biosynthetic process"/>
    <property type="evidence" value="ECO:0007669"/>
    <property type="project" value="UniProtKB-UniRule"/>
</dbReference>
<dbReference type="CDD" id="cd02164">
    <property type="entry name" value="PPAT_CoAS"/>
    <property type="match status" value="1"/>
</dbReference>
<dbReference type="Gene3D" id="3.40.50.620">
    <property type="entry name" value="HUPs"/>
    <property type="match status" value="1"/>
</dbReference>
<dbReference type="HAMAP" id="MF_00647">
    <property type="entry name" value="PPAT_arch"/>
    <property type="match status" value="1"/>
</dbReference>
<dbReference type="InterPro" id="IPR054937">
    <property type="entry name" value="CoaD_Thcocales"/>
</dbReference>
<dbReference type="InterPro" id="IPR004821">
    <property type="entry name" value="Cyt_trans-like"/>
</dbReference>
<dbReference type="InterPro" id="IPR023540">
    <property type="entry name" value="PPAT_arch"/>
</dbReference>
<dbReference type="InterPro" id="IPR014729">
    <property type="entry name" value="Rossmann-like_a/b/a_fold"/>
</dbReference>
<dbReference type="NCBIfam" id="NF041124">
    <property type="entry name" value="CoaD_Thcocales"/>
    <property type="match status" value="1"/>
</dbReference>
<dbReference type="NCBIfam" id="TIGR00125">
    <property type="entry name" value="cyt_tran_rel"/>
    <property type="match status" value="1"/>
</dbReference>
<dbReference type="NCBIfam" id="NF001985">
    <property type="entry name" value="PRK00777.1"/>
    <property type="match status" value="1"/>
</dbReference>
<dbReference type="PANTHER" id="PTHR10695:SF46">
    <property type="entry name" value="BIFUNCTIONAL COENZYME A SYNTHASE-RELATED"/>
    <property type="match status" value="1"/>
</dbReference>
<dbReference type="PANTHER" id="PTHR10695">
    <property type="entry name" value="DEPHOSPHO-COA KINASE-RELATED"/>
    <property type="match status" value="1"/>
</dbReference>
<dbReference type="Pfam" id="PF01467">
    <property type="entry name" value="CTP_transf_like"/>
    <property type="match status" value="1"/>
</dbReference>
<dbReference type="SUPFAM" id="SSF52374">
    <property type="entry name" value="Nucleotidylyl transferase"/>
    <property type="match status" value="1"/>
</dbReference>
<protein>
    <recommendedName>
        <fullName evidence="1">Phosphopantetheine adenylyltransferase</fullName>
        <ecNumber evidence="1">2.7.7.3</ecNumber>
    </recommendedName>
    <alternativeName>
        <fullName evidence="1">Dephospho-CoA pyrophosphorylase</fullName>
    </alternativeName>
    <alternativeName>
        <fullName evidence="1">Pantetheine-phosphate adenylyltransferase</fullName>
        <shortName evidence="1">PPAT</shortName>
    </alternativeName>
</protein>
<feature type="chain" id="PRO_0000156324" description="Phosphopantetheine adenylyltransferase">
    <location>
        <begin position="1"/>
        <end position="157"/>
    </location>
</feature>
<comment type="function">
    <text evidence="1">Reversibly transfers an adenylyl group from ATP to 4'-phosphopantetheine, yielding dephospho-CoA (dPCoA) and pyrophosphate.</text>
</comment>
<comment type="catalytic activity">
    <reaction evidence="1">
        <text>(R)-4'-phosphopantetheine + ATP + H(+) = 3'-dephospho-CoA + diphosphate</text>
        <dbReference type="Rhea" id="RHEA:19801"/>
        <dbReference type="ChEBI" id="CHEBI:15378"/>
        <dbReference type="ChEBI" id="CHEBI:30616"/>
        <dbReference type="ChEBI" id="CHEBI:33019"/>
        <dbReference type="ChEBI" id="CHEBI:57328"/>
        <dbReference type="ChEBI" id="CHEBI:61723"/>
        <dbReference type="EC" id="2.7.7.3"/>
    </reaction>
</comment>
<comment type="pathway">
    <text evidence="1">Cofactor biosynthesis; coenzyme A biosynthesis.</text>
</comment>
<comment type="subunit">
    <text>Monomer.</text>
</comment>
<comment type="subcellular location">
    <subcellularLocation>
        <location evidence="1">Cytoplasm</location>
    </subcellularLocation>
</comment>
<comment type="similarity">
    <text evidence="1 2">Belongs to the eukaryotic CoaD family.</text>
</comment>